<gene>
    <name type="primary">los1</name>
    <name type="ORF">NCU11169</name>
</gene>
<dbReference type="EMBL" id="CM002238">
    <property type="protein sequence ID" value="ESA43277.1"/>
    <property type="molecule type" value="Genomic_DNA"/>
</dbReference>
<dbReference type="RefSeq" id="XP_011393760.1">
    <property type="nucleotide sequence ID" value="XM_011395458.1"/>
</dbReference>
<dbReference type="SMR" id="Q7RWV9"/>
<dbReference type="FunCoup" id="Q7RWV9">
    <property type="interactions" value="1020"/>
</dbReference>
<dbReference type="STRING" id="367110.Q7RWV9"/>
<dbReference type="PaxDb" id="5141-EFNCRP00000000410"/>
<dbReference type="EnsemblFungi" id="ESA43277">
    <property type="protein sequence ID" value="ESA43277"/>
    <property type="gene ID" value="NCU00134"/>
</dbReference>
<dbReference type="GeneID" id="23568336"/>
<dbReference type="KEGG" id="ncr:NCU00134"/>
<dbReference type="VEuPathDB" id="FungiDB:NCU00134"/>
<dbReference type="HOGENOM" id="CLU_004414_0_1_1"/>
<dbReference type="InParanoid" id="Q7RWV9"/>
<dbReference type="OrthoDB" id="26399at2759"/>
<dbReference type="Proteomes" id="UP000001805">
    <property type="component" value="Chromosome 3, Linkage Group III"/>
</dbReference>
<dbReference type="GO" id="GO:0005737">
    <property type="term" value="C:cytoplasm"/>
    <property type="evidence" value="ECO:0000318"/>
    <property type="project" value="GO_Central"/>
</dbReference>
<dbReference type="GO" id="GO:0016363">
    <property type="term" value="C:nuclear matrix"/>
    <property type="evidence" value="ECO:0000318"/>
    <property type="project" value="GO_Central"/>
</dbReference>
<dbReference type="GO" id="GO:0005643">
    <property type="term" value="C:nuclear pore"/>
    <property type="evidence" value="ECO:0000318"/>
    <property type="project" value="GO_Central"/>
</dbReference>
<dbReference type="GO" id="GO:0031267">
    <property type="term" value="F:small GTPase binding"/>
    <property type="evidence" value="ECO:0007669"/>
    <property type="project" value="InterPro"/>
</dbReference>
<dbReference type="GO" id="GO:0000049">
    <property type="term" value="F:tRNA binding"/>
    <property type="evidence" value="ECO:0000318"/>
    <property type="project" value="GO_Central"/>
</dbReference>
<dbReference type="GO" id="GO:0008033">
    <property type="term" value="P:tRNA processing"/>
    <property type="evidence" value="ECO:0007669"/>
    <property type="project" value="UniProtKB-KW"/>
</dbReference>
<dbReference type="GO" id="GO:0071528">
    <property type="term" value="P:tRNA re-export from nucleus"/>
    <property type="evidence" value="ECO:0000318"/>
    <property type="project" value="GO_Central"/>
</dbReference>
<dbReference type="FunFam" id="1.25.10.10:FF:000355">
    <property type="entry name" value="Exportin-T"/>
    <property type="match status" value="1"/>
</dbReference>
<dbReference type="Gene3D" id="1.25.10.10">
    <property type="entry name" value="Leucine-rich Repeat Variant"/>
    <property type="match status" value="1"/>
</dbReference>
<dbReference type="InterPro" id="IPR011989">
    <property type="entry name" value="ARM-like"/>
</dbReference>
<dbReference type="InterPro" id="IPR016024">
    <property type="entry name" value="ARM-type_fold"/>
</dbReference>
<dbReference type="InterPro" id="IPR013598">
    <property type="entry name" value="Exportin-1/Importin-b-like"/>
</dbReference>
<dbReference type="InterPro" id="IPR045546">
    <property type="entry name" value="Exportin-T_C"/>
</dbReference>
<dbReference type="InterPro" id="IPR040017">
    <property type="entry name" value="XPOT"/>
</dbReference>
<dbReference type="PANTHER" id="PTHR15952:SF11">
    <property type="entry name" value="EXPORTIN-T"/>
    <property type="match status" value="1"/>
</dbReference>
<dbReference type="PANTHER" id="PTHR15952">
    <property type="entry name" value="EXPORTIN-T/LOS1"/>
    <property type="match status" value="1"/>
</dbReference>
<dbReference type="Pfam" id="PF19282">
    <property type="entry name" value="Exportin-T"/>
    <property type="match status" value="1"/>
</dbReference>
<dbReference type="Pfam" id="PF08389">
    <property type="entry name" value="Xpo1"/>
    <property type="match status" value="1"/>
</dbReference>
<dbReference type="SUPFAM" id="SSF48371">
    <property type="entry name" value="ARM repeat"/>
    <property type="match status" value="1"/>
</dbReference>
<protein>
    <recommendedName>
        <fullName>Exportin-T</fullName>
    </recommendedName>
    <alternativeName>
        <fullName>Exportin(tRNA)</fullName>
    </alternativeName>
    <alternativeName>
        <fullName>Karyopherin-beta</fullName>
    </alternativeName>
    <alternativeName>
        <fullName>tRNA exportin</fullName>
    </alternativeName>
</protein>
<comment type="function">
    <text evidence="1">tRNA nucleus export receptor which facilitates tRNA translocation across the nuclear pore complex. Involved in pre-tRNA splicing, probably by affecting the interaction of pre-tRNA with splicing endonuclease (By similarity).</text>
</comment>
<comment type="subcellular location">
    <subcellularLocation>
        <location evidence="1">Nucleus</location>
    </subcellularLocation>
    <subcellularLocation>
        <location evidence="1">Cytoplasm</location>
    </subcellularLocation>
    <text evidence="1">Shuttles between the nucleus and the cytoplasm.</text>
</comment>
<comment type="similarity">
    <text evidence="2">Belongs to the exportin family.</text>
</comment>
<evidence type="ECO:0000250" key="1"/>
<evidence type="ECO:0000305" key="2"/>
<sequence length="1026" mass="114812">MDAQFEKAIEIAFDPRSSHALKSQALEFLNQVRTDVQAWRICAALFTRSPRASDIVRHVSLEMVNNAVHSQGLDAPDLAFVKNSLLDYITRTYGPNAQDQADPANVQNKLTQTLTYLFVALYGEGWETFFDDFLALTSSQNGASRDNLSGVMLYLRILSSVHDEIADLMISRQGNESKRNNDLKDLIRERHMQKIAMSWQDILAQWTNKHDGVVELTLKVIGKWVSWIDISLVVSQDMQNLILPLVGRVNNTSNNIDTVRDTAIDTLTEIVAKKMGPSHKMELISFLNLGGIITELLASQGLHEFKGTSRYDNDLAEVVAKLLNTIMTDVVRVLEDNKVDAETRAKAERHLQDFLPALLRLFSDEFDEVCSTVIPSLTDLLTFLRRVGTLPDSYSQMLRPILSAIVAKMRYDETSSWGTEDGESDEAEFQELRKRLQILQKSVAAVDQTLYIEFLSNLVGNMFATLEQQGPQMDWRDLDLALHEIYLFGELALPNAGLAHKSEPNVVATERLAVMMSKMVESGIANFPHPAILLQYMEICVRYHAFFESHHQYIAPVLENFVHLIHHEHPRVRTRSWYLFLRFVKQLRAQVGNVAKTVIQSISDLLPIKAEVPSTEAEDDMSSDESDHSADAIFNGQLYLFEAIGCISSTSTTPETDQALYARSVMEPLFSDMSVHLPRAKSGDAQAILQIHHIIMALGTLANGFADPNQSQNPNNQRTPPQAVSAEFSRASEAILVALNELNTNGEIRAACRSAFSRLLGVLGATILPQLPQWIEGLLSQSSSKDEMAFFLRLLEQIVYNFKGEIYNILDLLLTPLLQRVFAGLSEPINGTDDEIQLQELRREYVSFVQVILINELGGVLVSTSNQGVFESLVNSIMTIAKTIVHGNIVASRISFNVLARMAQQWGGPDVATIGENPTANGVPAPAFPGFDQFMLTQFHAACWEVMQDINFRPYADAQTRQILNEITGLEQIIYLKTGEKFISHCQTVTFPAVGMGAEDFLRALTSSTDRKAVMAYLQQLLKSRR</sequence>
<proteinExistence type="inferred from homology"/>
<reference key="1">
    <citation type="journal article" date="2003" name="Nature">
        <title>The genome sequence of the filamentous fungus Neurospora crassa.</title>
        <authorList>
            <person name="Galagan J.E."/>
            <person name="Calvo S.E."/>
            <person name="Borkovich K.A."/>
            <person name="Selker E.U."/>
            <person name="Read N.D."/>
            <person name="Jaffe D.B."/>
            <person name="FitzHugh W."/>
            <person name="Ma L.-J."/>
            <person name="Smirnov S."/>
            <person name="Purcell S."/>
            <person name="Rehman B."/>
            <person name="Elkins T."/>
            <person name="Engels R."/>
            <person name="Wang S."/>
            <person name="Nielsen C.B."/>
            <person name="Butler J."/>
            <person name="Endrizzi M."/>
            <person name="Qui D."/>
            <person name="Ianakiev P."/>
            <person name="Bell-Pedersen D."/>
            <person name="Nelson M.A."/>
            <person name="Werner-Washburne M."/>
            <person name="Selitrennikoff C.P."/>
            <person name="Kinsey J.A."/>
            <person name="Braun E.L."/>
            <person name="Zelter A."/>
            <person name="Schulte U."/>
            <person name="Kothe G.O."/>
            <person name="Jedd G."/>
            <person name="Mewes H.-W."/>
            <person name="Staben C."/>
            <person name="Marcotte E."/>
            <person name="Greenberg D."/>
            <person name="Roy A."/>
            <person name="Foley K."/>
            <person name="Naylor J."/>
            <person name="Stange-Thomann N."/>
            <person name="Barrett R."/>
            <person name="Gnerre S."/>
            <person name="Kamal M."/>
            <person name="Kamvysselis M."/>
            <person name="Mauceli E.W."/>
            <person name="Bielke C."/>
            <person name="Rudd S."/>
            <person name="Frishman D."/>
            <person name="Krystofova S."/>
            <person name="Rasmussen C."/>
            <person name="Metzenberg R.L."/>
            <person name="Perkins D.D."/>
            <person name="Kroken S."/>
            <person name="Cogoni C."/>
            <person name="Macino G."/>
            <person name="Catcheside D.E.A."/>
            <person name="Li W."/>
            <person name="Pratt R.J."/>
            <person name="Osmani S.A."/>
            <person name="DeSouza C.P.C."/>
            <person name="Glass N.L."/>
            <person name="Orbach M.J."/>
            <person name="Berglund J.A."/>
            <person name="Voelker R."/>
            <person name="Yarden O."/>
            <person name="Plamann M."/>
            <person name="Seiler S."/>
            <person name="Dunlap J.C."/>
            <person name="Radford A."/>
            <person name="Aramayo R."/>
            <person name="Natvig D.O."/>
            <person name="Alex L.A."/>
            <person name="Mannhaupt G."/>
            <person name="Ebbole D.J."/>
            <person name="Freitag M."/>
            <person name="Paulsen I."/>
            <person name="Sachs M.S."/>
            <person name="Lander E.S."/>
            <person name="Nusbaum C."/>
            <person name="Birren B.W."/>
        </authorList>
    </citation>
    <scope>NUCLEOTIDE SEQUENCE [LARGE SCALE GENOMIC DNA]</scope>
    <source>
        <strain>ATCC 24698 / 74-OR23-1A / CBS 708.71 / DSM 1257 / FGSC 987</strain>
    </source>
</reference>
<feature type="chain" id="PRO_0000343100" description="Exportin-T">
    <location>
        <begin position="1"/>
        <end position="1026"/>
    </location>
</feature>
<name>XPOT_NEUCR</name>
<keyword id="KW-0963">Cytoplasm</keyword>
<keyword id="KW-0539">Nucleus</keyword>
<keyword id="KW-1185">Reference proteome</keyword>
<keyword id="KW-0694">RNA-binding</keyword>
<keyword id="KW-0813">Transport</keyword>
<keyword id="KW-0819">tRNA processing</keyword>
<keyword id="KW-0820">tRNA-binding</keyword>
<accession>Q7RWV9</accession>
<accession>U9W377</accession>
<organism>
    <name type="scientific">Neurospora crassa (strain ATCC 24698 / 74-OR23-1A / CBS 708.71 / DSM 1257 / FGSC 987)</name>
    <dbReference type="NCBI Taxonomy" id="367110"/>
    <lineage>
        <taxon>Eukaryota</taxon>
        <taxon>Fungi</taxon>
        <taxon>Dikarya</taxon>
        <taxon>Ascomycota</taxon>
        <taxon>Pezizomycotina</taxon>
        <taxon>Sordariomycetes</taxon>
        <taxon>Sordariomycetidae</taxon>
        <taxon>Sordariales</taxon>
        <taxon>Sordariaceae</taxon>
        <taxon>Neurospora</taxon>
    </lineage>
</organism>